<evidence type="ECO:0000255" key="1">
    <source>
        <dbReference type="HAMAP-Rule" id="MF_00523"/>
    </source>
</evidence>
<protein>
    <recommendedName>
        <fullName evidence="1">UDP-3-O-acylglucosamine N-acyltransferase</fullName>
        <ecNumber evidence="1">2.3.1.191</ecNumber>
    </recommendedName>
</protein>
<organism>
    <name type="scientific">Anaeromyxobacter sp. (strain Fw109-5)</name>
    <dbReference type="NCBI Taxonomy" id="404589"/>
    <lineage>
        <taxon>Bacteria</taxon>
        <taxon>Pseudomonadati</taxon>
        <taxon>Myxococcota</taxon>
        <taxon>Myxococcia</taxon>
        <taxon>Myxococcales</taxon>
        <taxon>Cystobacterineae</taxon>
        <taxon>Anaeromyxobacteraceae</taxon>
        <taxon>Anaeromyxobacter</taxon>
    </lineage>
</organism>
<gene>
    <name evidence="1" type="primary">lpxD</name>
    <name type="ordered locus">Anae109_1122</name>
</gene>
<name>LPXD_ANADF</name>
<keyword id="KW-0012">Acyltransferase</keyword>
<keyword id="KW-0441">Lipid A biosynthesis</keyword>
<keyword id="KW-0444">Lipid biosynthesis</keyword>
<keyword id="KW-0443">Lipid metabolism</keyword>
<keyword id="KW-1185">Reference proteome</keyword>
<keyword id="KW-0677">Repeat</keyword>
<keyword id="KW-0808">Transferase</keyword>
<sequence length="352" mass="36777">MTFTLAELASRVGGEVVGDGALVVEGVAPLEDAGPHDVSFFSNRKYRKAFEASRAGVVVVEPDAEIPAGRTVLRARNAYLAFAKISTLFHPPQEPLPEIAPEAVIHPSARVHPSAQVMPLASIGPDAVIGARTIVHPGVHVCEGARVGEDCLLYPNVVIRERCVVGNRVILQPGCVIGSDGFGFAFDPDGEGHGPRHFKVPQAGIAVVEDDVEIGANACIDRATLGATRVGRGTKIDNLVQLGHNVELGPLCLIVAQVGIAGSTKLGMGVVAAGQVGIIGHLNIGDGVKMGAQSGIAGDVAAGDTVSGTPAQPHADWLRSQAALRQLPDLRREVKELRRELDRLRAGKEGKP</sequence>
<accession>A7H9D4</accession>
<dbReference type="EC" id="2.3.1.191" evidence="1"/>
<dbReference type="EMBL" id="CP000769">
    <property type="protein sequence ID" value="ABS25330.1"/>
    <property type="molecule type" value="Genomic_DNA"/>
</dbReference>
<dbReference type="RefSeq" id="WP_011985436.1">
    <property type="nucleotide sequence ID" value="NC_009675.1"/>
</dbReference>
<dbReference type="SMR" id="A7H9D4"/>
<dbReference type="STRING" id="404589.Anae109_1122"/>
<dbReference type="KEGG" id="afw:Anae109_1122"/>
<dbReference type="eggNOG" id="COG1044">
    <property type="taxonomic scope" value="Bacteria"/>
</dbReference>
<dbReference type="HOGENOM" id="CLU_049865_0_0_7"/>
<dbReference type="OrthoDB" id="9784739at2"/>
<dbReference type="UniPathway" id="UPA00973"/>
<dbReference type="Proteomes" id="UP000006382">
    <property type="component" value="Chromosome"/>
</dbReference>
<dbReference type="GO" id="GO:0016020">
    <property type="term" value="C:membrane"/>
    <property type="evidence" value="ECO:0007669"/>
    <property type="project" value="GOC"/>
</dbReference>
<dbReference type="GO" id="GO:0016410">
    <property type="term" value="F:N-acyltransferase activity"/>
    <property type="evidence" value="ECO:0007669"/>
    <property type="project" value="InterPro"/>
</dbReference>
<dbReference type="GO" id="GO:0009245">
    <property type="term" value="P:lipid A biosynthetic process"/>
    <property type="evidence" value="ECO:0007669"/>
    <property type="project" value="UniProtKB-UniRule"/>
</dbReference>
<dbReference type="CDD" id="cd03352">
    <property type="entry name" value="LbH_LpxD"/>
    <property type="match status" value="1"/>
</dbReference>
<dbReference type="Gene3D" id="2.160.10.10">
    <property type="entry name" value="Hexapeptide repeat proteins"/>
    <property type="match status" value="1"/>
</dbReference>
<dbReference type="Gene3D" id="3.40.1390.10">
    <property type="entry name" value="MurE/MurF, N-terminal domain"/>
    <property type="match status" value="1"/>
</dbReference>
<dbReference type="HAMAP" id="MF_00523">
    <property type="entry name" value="LpxD"/>
    <property type="match status" value="1"/>
</dbReference>
<dbReference type="InterPro" id="IPR001451">
    <property type="entry name" value="Hexapep"/>
</dbReference>
<dbReference type="InterPro" id="IPR007691">
    <property type="entry name" value="LpxD"/>
</dbReference>
<dbReference type="InterPro" id="IPR011004">
    <property type="entry name" value="Trimer_LpxA-like_sf"/>
</dbReference>
<dbReference type="InterPro" id="IPR020573">
    <property type="entry name" value="UDP_GlcNAc_AcTrfase_non-rep"/>
</dbReference>
<dbReference type="NCBIfam" id="TIGR01853">
    <property type="entry name" value="lipid_A_lpxD"/>
    <property type="match status" value="1"/>
</dbReference>
<dbReference type="NCBIfam" id="NF002060">
    <property type="entry name" value="PRK00892.1"/>
    <property type="match status" value="1"/>
</dbReference>
<dbReference type="PANTHER" id="PTHR43378">
    <property type="entry name" value="UDP-3-O-ACYLGLUCOSAMINE N-ACYLTRANSFERASE"/>
    <property type="match status" value="1"/>
</dbReference>
<dbReference type="PANTHER" id="PTHR43378:SF2">
    <property type="entry name" value="UDP-3-O-ACYLGLUCOSAMINE N-ACYLTRANSFERASE 1, MITOCHONDRIAL-RELATED"/>
    <property type="match status" value="1"/>
</dbReference>
<dbReference type="Pfam" id="PF00132">
    <property type="entry name" value="Hexapep"/>
    <property type="match status" value="1"/>
</dbReference>
<dbReference type="Pfam" id="PF04613">
    <property type="entry name" value="LpxD"/>
    <property type="match status" value="1"/>
</dbReference>
<dbReference type="SUPFAM" id="SSF51161">
    <property type="entry name" value="Trimeric LpxA-like enzymes"/>
    <property type="match status" value="1"/>
</dbReference>
<proteinExistence type="inferred from homology"/>
<reference key="1">
    <citation type="journal article" date="2015" name="Genome Announc.">
        <title>Complete genome sequence of Anaeromyxobacter sp. Fw109-5, an anaerobic, metal-reducing bacterium isolated from a contaminated subsurface environment.</title>
        <authorList>
            <person name="Hwang C."/>
            <person name="Copeland A."/>
            <person name="Lucas S."/>
            <person name="Lapidus A."/>
            <person name="Barry K."/>
            <person name="Glavina Del Rio T."/>
            <person name="Dalin E."/>
            <person name="Tice H."/>
            <person name="Pitluck S."/>
            <person name="Sims D."/>
            <person name="Brettin T."/>
            <person name="Bruce D.C."/>
            <person name="Detter J.C."/>
            <person name="Han C.S."/>
            <person name="Schmutz J."/>
            <person name="Larimer F.W."/>
            <person name="Land M.L."/>
            <person name="Hauser L.J."/>
            <person name="Kyrpides N."/>
            <person name="Lykidis A."/>
            <person name="Richardson P."/>
            <person name="Belieav A."/>
            <person name="Sanford R.A."/>
            <person name="Loeffler F.E."/>
            <person name="Fields M.W."/>
        </authorList>
    </citation>
    <scope>NUCLEOTIDE SEQUENCE [LARGE SCALE GENOMIC DNA]</scope>
    <source>
        <strain>Fw109-5</strain>
    </source>
</reference>
<feature type="chain" id="PRO_1000050923" description="UDP-3-O-acylglucosamine N-acyltransferase">
    <location>
        <begin position="1"/>
        <end position="352"/>
    </location>
</feature>
<feature type="active site" description="Proton acceptor" evidence="1">
    <location>
        <position position="244"/>
    </location>
</feature>
<comment type="function">
    <text evidence="1">Catalyzes the N-acylation of UDP-3-O-acylglucosamine using 3-hydroxyacyl-ACP as the acyl donor. Is involved in the biosynthesis of lipid A, a phosphorylated glycolipid that anchors the lipopolysaccharide to the outer membrane of the cell.</text>
</comment>
<comment type="catalytic activity">
    <reaction evidence="1">
        <text>a UDP-3-O-[(3R)-3-hydroxyacyl]-alpha-D-glucosamine + a (3R)-hydroxyacyl-[ACP] = a UDP-2-N,3-O-bis[(3R)-3-hydroxyacyl]-alpha-D-glucosamine + holo-[ACP] + H(+)</text>
        <dbReference type="Rhea" id="RHEA:53836"/>
        <dbReference type="Rhea" id="RHEA-COMP:9685"/>
        <dbReference type="Rhea" id="RHEA-COMP:9945"/>
        <dbReference type="ChEBI" id="CHEBI:15378"/>
        <dbReference type="ChEBI" id="CHEBI:64479"/>
        <dbReference type="ChEBI" id="CHEBI:78827"/>
        <dbReference type="ChEBI" id="CHEBI:137740"/>
        <dbReference type="ChEBI" id="CHEBI:137748"/>
        <dbReference type="EC" id="2.3.1.191"/>
    </reaction>
</comment>
<comment type="pathway">
    <text evidence="1">Bacterial outer membrane biogenesis; LPS lipid A biosynthesis.</text>
</comment>
<comment type="subunit">
    <text evidence="1">Homotrimer.</text>
</comment>
<comment type="similarity">
    <text evidence="1">Belongs to the transferase hexapeptide repeat family. LpxD subfamily.</text>
</comment>